<keyword id="KW-0067">ATP-binding</keyword>
<keyword id="KW-0418">Kinase</keyword>
<keyword id="KW-0441">Lipid A biosynthesis</keyword>
<keyword id="KW-0444">Lipid biosynthesis</keyword>
<keyword id="KW-0443">Lipid metabolism</keyword>
<keyword id="KW-0547">Nucleotide-binding</keyword>
<keyword id="KW-0808">Transferase</keyword>
<feature type="chain" id="PRO_0000291239" description="Tetraacyldisaccharide 4'-kinase">
    <location>
        <begin position="1"/>
        <end position="315"/>
    </location>
</feature>
<feature type="binding site" evidence="1">
    <location>
        <begin position="52"/>
        <end position="59"/>
    </location>
    <ligand>
        <name>ATP</name>
        <dbReference type="ChEBI" id="CHEBI:30616"/>
    </ligand>
</feature>
<evidence type="ECO:0000255" key="1">
    <source>
        <dbReference type="HAMAP-Rule" id="MF_00409"/>
    </source>
</evidence>
<name>LPXK_RUTMC</name>
<reference key="1">
    <citation type="journal article" date="2007" name="Science">
        <title>The Calyptogena magnifica chemoautotrophic symbiont genome.</title>
        <authorList>
            <person name="Newton I.L.G."/>
            <person name="Woyke T."/>
            <person name="Auchtung T.A."/>
            <person name="Dilly G.F."/>
            <person name="Dutton R.J."/>
            <person name="Fisher M.C."/>
            <person name="Fontanez K.M."/>
            <person name="Lau E."/>
            <person name="Stewart F.J."/>
            <person name="Richardson P.M."/>
            <person name="Barry K.W."/>
            <person name="Saunders E."/>
            <person name="Detter J.C."/>
            <person name="Wu D."/>
            <person name="Eisen J.A."/>
            <person name="Cavanaugh C.M."/>
        </authorList>
    </citation>
    <scope>NUCLEOTIDE SEQUENCE [LARGE SCALE GENOMIC DNA]</scope>
</reference>
<dbReference type="EC" id="2.7.1.130" evidence="1"/>
<dbReference type="EMBL" id="CP000488">
    <property type="protein sequence ID" value="ABL02560.1"/>
    <property type="molecule type" value="Genomic_DNA"/>
</dbReference>
<dbReference type="RefSeq" id="WP_011738185.1">
    <property type="nucleotide sequence ID" value="NC_008610.1"/>
</dbReference>
<dbReference type="SMR" id="A1AXA3"/>
<dbReference type="STRING" id="413404.Rmag_0843"/>
<dbReference type="KEGG" id="rma:Rmag_0843"/>
<dbReference type="eggNOG" id="COG1663">
    <property type="taxonomic scope" value="Bacteria"/>
</dbReference>
<dbReference type="HOGENOM" id="CLU_038816_2_0_6"/>
<dbReference type="OrthoDB" id="9766423at2"/>
<dbReference type="UniPathway" id="UPA00359">
    <property type="reaction ID" value="UER00482"/>
</dbReference>
<dbReference type="Proteomes" id="UP000002587">
    <property type="component" value="Chromosome"/>
</dbReference>
<dbReference type="GO" id="GO:0005886">
    <property type="term" value="C:plasma membrane"/>
    <property type="evidence" value="ECO:0007669"/>
    <property type="project" value="TreeGrafter"/>
</dbReference>
<dbReference type="GO" id="GO:0005524">
    <property type="term" value="F:ATP binding"/>
    <property type="evidence" value="ECO:0007669"/>
    <property type="project" value="UniProtKB-UniRule"/>
</dbReference>
<dbReference type="GO" id="GO:0009029">
    <property type="term" value="F:tetraacyldisaccharide 4'-kinase activity"/>
    <property type="evidence" value="ECO:0007669"/>
    <property type="project" value="UniProtKB-UniRule"/>
</dbReference>
<dbReference type="GO" id="GO:0009245">
    <property type="term" value="P:lipid A biosynthetic process"/>
    <property type="evidence" value="ECO:0007669"/>
    <property type="project" value="UniProtKB-UniRule"/>
</dbReference>
<dbReference type="GO" id="GO:0009244">
    <property type="term" value="P:lipopolysaccharide core region biosynthetic process"/>
    <property type="evidence" value="ECO:0007669"/>
    <property type="project" value="TreeGrafter"/>
</dbReference>
<dbReference type="CDD" id="cd01983">
    <property type="entry name" value="SIMIBI"/>
    <property type="match status" value="1"/>
</dbReference>
<dbReference type="HAMAP" id="MF_00409">
    <property type="entry name" value="LpxK"/>
    <property type="match status" value="1"/>
</dbReference>
<dbReference type="InterPro" id="IPR003758">
    <property type="entry name" value="LpxK"/>
</dbReference>
<dbReference type="InterPro" id="IPR027417">
    <property type="entry name" value="P-loop_NTPase"/>
</dbReference>
<dbReference type="NCBIfam" id="TIGR00682">
    <property type="entry name" value="lpxK"/>
    <property type="match status" value="1"/>
</dbReference>
<dbReference type="PANTHER" id="PTHR42724">
    <property type="entry name" value="TETRAACYLDISACCHARIDE 4'-KINASE"/>
    <property type="match status" value="1"/>
</dbReference>
<dbReference type="PANTHER" id="PTHR42724:SF1">
    <property type="entry name" value="TETRAACYLDISACCHARIDE 4'-KINASE, MITOCHONDRIAL-RELATED"/>
    <property type="match status" value="1"/>
</dbReference>
<dbReference type="Pfam" id="PF02606">
    <property type="entry name" value="LpxK"/>
    <property type="match status" value="1"/>
</dbReference>
<dbReference type="SUPFAM" id="SSF52540">
    <property type="entry name" value="P-loop containing nucleoside triphosphate hydrolases"/>
    <property type="match status" value="1"/>
</dbReference>
<sequence>MNLNIRGIINYSLLPISGIFYLVSVFRKWLYRVNFFKVQKFKYPVIVVGNITVGGTGKTPIVIALAQYFKQQGKQVGIVSRGYGGAHHQGSLLVNKDTNVYLSGDEPLLIALQTDLPVMINKNRAKAVKDLINQCQVDLIISDDGLQHYKMDRDVEIVVIDGIKRFGNGFFLPLGPLRESITRLKSVDFVINNAGLCAGEFSVKLTLKMFVNVKTGEEKSLNYFKGKYCHGVAGIGHPERFFNALIRLGINLEHHIFADHYIYQQSDLVFEDNHPILMTAKDCVKCTQFENDQMWYLQVEADLSDDFLKKLDAKL</sequence>
<gene>
    <name evidence="1" type="primary">lpxK</name>
    <name type="ordered locus">Rmag_0843</name>
</gene>
<comment type="function">
    <text evidence="1">Transfers the gamma-phosphate of ATP to the 4'-position of a tetraacyldisaccharide 1-phosphate intermediate (termed DS-1-P) to form tetraacyldisaccharide 1,4'-bis-phosphate (lipid IVA).</text>
</comment>
<comment type="catalytic activity">
    <reaction evidence="1">
        <text>a lipid A disaccharide + ATP = a lipid IVA + ADP + H(+)</text>
        <dbReference type="Rhea" id="RHEA:67840"/>
        <dbReference type="ChEBI" id="CHEBI:15378"/>
        <dbReference type="ChEBI" id="CHEBI:30616"/>
        <dbReference type="ChEBI" id="CHEBI:176343"/>
        <dbReference type="ChEBI" id="CHEBI:176425"/>
        <dbReference type="ChEBI" id="CHEBI:456216"/>
        <dbReference type="EC" id="2.7.1.130"/>
    </reaction>
</comment>
<comment type="pathway">
    <text evidence="1">Glycolipid biosynthesis; lipid IV(A) biosynthesis; lipid IV(A) from (3R)-3-hydroxytetradecanoyl-[acyl-carrier-protein] and UDP-N-acetyl-alpha-D-glucosamine: step 6/6.</text>
</comment>
<comment type="similarity">
    <text evidence="1">Belongs to the LpxK family.</text>
</comment>
<proteinExistence type="inferred from homology"/>
<accession>A1AXA3</accession>
<organism>
    <name type="scientific">Ruthia magnifica subsp. Calyptogena magnifica</name>
    <dbReference type="NCBI Taxonomy" id="413404"/>
    <lineage>
        <taxon>Bacteria</taxon>
        <taxon>Pseudomonadati</taxon>
        <taxon>Pseudomonadota</taxon>
        <taxon>Gammaproteobacteria</taxon>
        <taxon>Candidatus Pseudothioglobaceae</taxon>
        <taxon>Candidatus Ruthturnera</taxon>
    </lineage>
</organism>
<protein>
    <recommendedName>
        <fullName evidence="1">Tetraacyldisaccharide 4'-kinase</fullName>
        <ecNumber evidence="1">2.7.1.130</ecNumber>
    </recommendedName>
    <alternativeName>
        <fullName evidence="1">Lipid A 4'-kinase</fullName>
    </alternativeName>
</protein>